<proteinExistence type="inferred from homology"/>
<keyword id="KW-0067">ATP-binding</keyword>
<keyword id="KW-0119">Carbohydrate metabolism</keyword>
<keyword id="KW-0320">Glycogen biosynthesis</keyword>
<keyword id="KW-0321">Glycogen metabolism</keyword>
<keyword id="KW-0547">Nucleotide-binding</keyword>
<keyword id="KW-0548">Nucleotidyltransferase</keyword>
<keyword id="KW-0808">Transferase</keyword>
<dbReference type="EC" id="2.7.7.27" evidence="1"/>
<dbReference type="EMBL" id="CP000439">
    <property type="protein sequence ID" value="ABK89410.1"/>
    <property type="molecule type" value="Genomic_DNA"/>
</dbReference>
<dbReference type="RefSeq" id="WP_003038524.1">
    <property type="nucleotide sequence ID" value="NC_008601.1"/>
</dbReference>
<dbReference type="SMR" id="A0Q595"/>
<dbReference type="KEGG" id="ftn:FTN_0515"/>
<dbReference type="KEGG" id="ftx:AW25_1514"/>
<dbReference type="BioCyc" id="FTUL401614:G1G75-537-MONOMER"/>
<dbReference type="UniPathway" id="UPA00164"/>
<dbReference type="Proteomes" id="UP000000762">
    <property type="component" value="Chromosome"/>
</dbReference>
<dbReference type="GO" id="GO:0005524">
    <property type="term" value="F:ATP binding"/>
    <property type="evidence" value="ECO:0007669"/>
    <property type="project" value="UniProtKB-KW"/>
</dbReference>
<dbReference type="GO" id="GO:0008878">
    <property type="term" value="F:glucose-1-phosphate adenylyltransferase activity"/>
    <property type="evidence" value="ECO:0007669"/>
    <property type="project" value="UniProtKB-UniRule"/>
</dbReference>
<dbReference type="GO" id="GO:0005978">
    <property type="term" value="P:glycogen biosynthetic process"/>
    <property type="evidence" value="ECO:0007669"/>
    <property type="project" value="UniProtKB-UniRule"/>
</dbReference>
<dbReference type="CDD" id="cd02508">
    <property type="entry name" value="ADP_Glucose_PP"/>
    <property type="match status" value="1"/>
</dbReference>
<dbReference type="CDD" id="cd04651">
    <property type="entry name" value="LbH_G1P_AT_C"/>
    <property type="match status" value="1"/>
</dbReference>
<dbReference type="Gene3D" id="2.160.10.10">
    <property type="entry name" value="Hexapeptide repeat proteins"/>
    <property type="match status" value="1"/>
</dbReference>
<dbReference type="Gene3D" id="3.90.550.10">
    <property type="entry name" value="Spore Coat Polysaccharide Biosynthesis Protein SpsA, Chain A"/>
    <property type="match status" value="1"/>
</dbReference>
<dbReference type="HAMAP" id="MF_00624">
    <property type="entry name" value="GlgC"/>
    <property type="match status" value="1"/>
</dbReference>
<dbReference type="InterPro" id="IPR011831">
    <property type="entry name" value="ADP-Glc_PPase"/>
</dbReference>
<dbReference type="InterPro" id="IPR005836">
    <property type="entry name" value="ADP_Glu_pyroP_CS"/>
</dbReference>
<dbReference type="InterPro" id="IPR023049">
    <property type="entry name" value="GlgC_bac"/>
</dbReference>
<dbReference type="InterPro" id="IPR056818">
    <property type="entry name" value="GlmU/GlgC-like_hexapep"/>
</dbReference>
<dbReference type="InterPro" id="IPR005835">
    <property type="entry name" value="NTP_transferase_dom"/>
</dbReference>
<dbReference type="InterPro" id="IPR029044">
    <property type="entry name" value="Nucleotide-diphossugar_trans"/>
</dbReference>
<dbReference type="InterPro" id="IPR011004">
    <property type="entry name" value="Trimer_LpxA-like_sf"/>
</dbReference>
<dbReference type="NCBIfam" id="TIGR02091">
    <property type="entry name" value="glgC"/>
    <property type="match status" value="1"/>
</dbReference>
<dbReference type="NCBIfam" id="NF001947">
    <property type="entry name" value="PRK00725.1"/>
    <property type="match status" value="1"/>
</dbReference>
<dbReference type="NCBIfam" id="NF002023">
    <property type="entry name" value="PRK00844.1"/>
    <property type="match status" value="1"/>
</dbReference>
<dbReference type="PANTHER" id="PTHR43523:SF2">
    <property type="entry name" value="GLUCOSE-1-PHOSPHATE ADENYLYLTRANSFERASE"/>
    <property type="match status" value="1"/>
</dbReference>
<dbReference type="PANTHER" id="PTHR43523">
    <property type="entry name" value="GLUCOSE-1-PHOSPHATE ADENYLYLTRANSFERASE-RELATED"/>
    <property type="match status" value="1"/>
</dbReference>
<dbReference type="Pfam" id="PF24894">
    <property type="entry name" value="Hexapep_GlmU"/>
    <property type="match status" value="1"/>
</dbReference>
<dbReference type="Pfam" id="PF00483">
    <property type="entry name" value="NTP_transferase"/>
    <property type="match status" value="1"/>
</dbReference>
<dbReference type="SUPFAM" id="SSF53448">
    <property type="entry name" value="Nucleotide-diphospho-sugar transferases"/>
    <property type="match status" value="1"/>
</dbReference>
<dbReference type="SUPFAM" id="SSF51161">
    <property type="entry name" value="Trimeric LpxA-like enzymes"/>
    <property type="match status" value="1"/>
</dbReference>
<dbReference type="PROSITE" id="PS00808">
    <property type="entry name" value="ADP_GLC_PYROPHOSPH_1"/>
    <property type="match status" value="1"/>
</dbReference>
<dbReference type="PROSITE" id="PS00809">
    <property type="entry name" value="ADP_GLC_PYROPHOSPH_2"/>
    <property type="match status" value="1"/>
</dbReference>
<dbReference type="PROSITE" id="PS00810">
    <property type="entry name" value="ADP_GLC_PYROPHOSPH_3"/>
    <property type="match status" value="1"/>
</dbReference>
<comment type="function">
    <text evidence="1">Involved in the biosynthesis of ADP-glucose, a building block required for the elongation reactions to produce glycogen. Catalyzes the reaction between ATP and alpha-D-glucose 1-phosphate (G1P) to produce pyrophosphate and ADP-Glc.</text>
</comment>
<comment type="catalytic activity">
    <reaction evidence="1">
        <text>alpha-D-glucose 1-phosphate + ATP + H(+) = ADP-alpha-D-glucose + diphosphate</text>
        <dbReference type="Rhea" id="RHEA:12120"/>
        <dbReference type="ChEBI" id="CHEBI:15378"/>
        <dbReference type="ChEBI" id="CHEBI:30616"/>
        <dbReference type="ChEBI" id="CHEBI:33019"/>
        <dbReference type="ChEBI" id="CHEBI:57498"/>
        <dbReference type="ChEBI" id="CHEBI:58601"/>
        <dbReference type="EC" id="2.7.7.27"/>
    </reaction>
</comment>
<comment type="pathway">
    <text evidence="1">Glycan biosynthesis; glycogen biosynthesis.</text>
</comment>
<comment type="subunit">
    <text evidence="1">Homotetramer.</text>
</comment>
<comment type="similarity">
    <text evidence="1">Belongs to the bacterial/plant glucose-1-phosphate adenylyltransferase family.</text>
</comment>
<evidence type="ECO:0000255" key="1">
    <source>
        <dbReference type="HAMAP-Rule" id="MF_00624"/>
    </source>
</evidence>
<accession>A0Q595</accession>
<organism>
    <name type="scientific">Francisella tularensis subsp. novicida (strain U112)</name>
    <dbReference type="NCBI Taxonomy" id="401614"/>
    <lineage>
        <taxon>Bacteria</taxon>
        <taxon>Pseudomonadati</taxon>
        <taxon>Pseudomonadota</taxon>
        <taxon>Gammaproteobacteria</taxon>
        <taxon>Thiotrichales</taxon>
        <taxon>Francisellaceae</taxon>
        <taxon>Francisella</taxon>
    </lineage>
</organism>
<feature type="chain" id="PRO_1000051567" description="Glucose-1-phosphate adenylyltransferase">
    <location>
        <begin position="1"/>
        <end position="423"/>
    </location>
</feature>
<feature type="binding site" evidence="1">
    <location>
        <position position="108"/>
    </location>
    <ligand>
        <name>alpha-D-glucose 1-phosphate</name>
        <dbReference type="ChEBI" id="CHEBI:58601"/>
    </ligand>
</feature>
<feature type="binding site" evidence="1">
    <location>
        <position position="173"/>
    </location>
    <ligand>
        <name>alpha-D-glucose 1-phosphate</name>
        <dbReference type="ChEBI" id="CHEBI:58601"/>
    </ligand>
</feature>
<feature type="binding site" evidence="1">
    <location>
        <begin position="188"/>
        <end position="189"/>
    </location>
    <ligand>
        <name>alpha-D-glucose 1-phosphate</name>
        <dbReference type="ChEBI" id="CHEBI:58601"/>
    </ligand>
</feature>
<feature type="binding site" evidence="1">
    <location>
        <position position="207"/>
    </location>
    <ligand>
        <name>alpha-D-glucose 1-phosphate</name>
        <dbReference type="ChEBI" id="CHEBI:58601"/>
    </ligand>
</feature>
<reference key="1">
    <citation type="journal article" date="2007" name="Genome Biol.">
        <title>Comparison of Francisella tularensis genomes reveals evolutionary events associated with the emergence of human pathogenic strains.</title>
        <authorList>
            <person name="Rohmer L."/>
            <person name="Fong C."/>
            <person name="Abmayr S."/>
            <person name="Wasnick M."/>
            <person name="Larson Freeman T.J."/>
            <person name="Radey M."/>
            <person name="Guina T."/>
            <person name="Svensson K."/>
            <person name="Hayden H.S."/>
            <person name="Jacobs M."/>
            <person name="Gallagher L.A."/>
            <person name="Manoil C."/>
            <person name="Ernst R.K."/>
            <person name="Drees B."/>
            <person name="Buckley D."/>
            <person name="Haugen E."/>
            <person name="Bovee D."/>
            <person name="Zhou Y."/>
            <person name="Chang J."/>
            <person name="Levy R."/>
            <person name="Lim R."/>
            <person name="Gillett W."/>
            <person name="Guenthener D."/>
            <person name="Kang A."/>
            <person name="Shaffer S.A."/>
            <person name="Taylor G."/>
            <person name="Chen J."/>
            <person name="Gallis B."/>
            <person name="D'Argenio D.A."/>
            <person name="Forsman M."/>
            <person name="Olson M.V."/>
            <person name="Goodlett D.R."/>
            <person name="Kaul R."/>
            <person name="Miller S.I."/>
            <person name="Brittnacher M.J."/>
        </authorList>
    </citation>
    <scope>NUCLEOTIDE SEQUENCE [LARGE SCALE GENOMIC DNA]</scope>
    <source>
        <strain>U112</strain>
    </source>
</reference>
<sequence>MDNHNSSHQLYKKAMALVLAGGRGSRLYNLTDTRAKPAVYFGGKFRIIDFALSNCLNSGIRRIGVVTQYKSHSLLRHLQRGWGFLRGELNEFIDLLPAQQRVDEEHWYRGTADAVYQNIDILRSYGPEYVIVLAGDHIYKMDYSIMLRDHAQSGYKCTVGCVEIAKEEAYAFGIMGIDENRKITSFIEKPKKNAPTIPGTTDRCYASMGIYIFNSDYLYDLLEEDITNKESSHDFGKDIIPRVVSENQALAHPFSMSCVPRGEGIQPYWRDVGTIDAFWEANLDLAANMPELNIYDKDWPVWTAQEQLPPAKFVPDRNGNHGVITNTLASGGCIVLGSEISKSLMFSKVRVLAGCKIDQCVIMPEVVVGENCRLKKVVIDKGCDIPAGMVIGEDPIEDAKNFYRTDKGVVLVTKKMIDELKEK</sequence>
<gene>
    <name evidence="1" type="primary">glgC</name>
    <name type="ordered locus">FTN_0515</name>
</gene>
<protein>
    <recommendedName>
        <fullName evidence="1">Glucose-1-phosphate adenylyltransferase</fullName>
        <ecNumber evidence="1">2.7.7.27</ecNumber>
    </recommendedName>
    <alternativeName>
        <fullName evidence="1">ADP-glucose pyrophosphorylase</fullName>
        <shortName evidence="1">ADPGlc PPase</shortName>
    </alternativeName>
    <alternativeName>
        <fullName evidence="1">ADP-glucose synthase</fullName>
    </alternativeName>
</protein>
<name>GLGC_FRATN</name>